<comment type="function">
    <text evidence="1">One of the primary rRNA binding proteins, it binds directly to 16S rRNA where it nucleates assembly of the body of the 30S subunit.</text>
</comment>
<comment type="function">
    <text evidence="1">With S5 and S12 plays an important role in translational accuracy.</text>
</comment>
<comment type="subunit">
    <text evidence="1">Part of the 30S ribosomal subunit. Contacts protein S5. The interaction surface between S4 and S5 is involved in control of translational fidelity (By similarity).</text>
</comment>
<comment type="subcellular location">
    <subcellularLocation>
        <location>Plastid</location>
        <location>Chloroplast</location>
    </subcellularLocation>
</comment>
<comment type="similarity">
    <text evidence="2">Belongs to the universal ribosomal protein uS4 family.</text>
</comment>
<accession>Q9FSA4</accession>
<proteinExistence type="inferred from homology"/>
<protein>
    <recommendedName>
        <fullName evidence="2">Small ribosomal subunit protein uS4c</fullName>
    </recommendedName>
    <alternativeName>
        <fullName>30S ribosomal protein S4, chloroplastic</fullName>
    </alternativeName>
</protein>
<name>RR4_SPHDO</name>
<evidence type="ECO:0000250" key="1"/>
<evidence type="ECO:0000305" key="2"/>
<dbReference type="EMBL" id="AJ250455">
    <property type="protein sequence ID" value="CAC14065.1"/>
    <property type="molecule type" value="Genomic_DNA"/>
</dbReference>
<dbReference type="SMR" id="Q9FSA4"/>
<dbReference type="GO" id="GO:0009507">
    <property type="term" value="C:chloroplast"/>
    <property type="evidence" value="ECO:0007669"/>
    <property type="project" value="UniProtKB-SubCell"/>
</dbReference>
<dbReference type="GO" id="GO:0015935">
    <property type="term" value="C:small ribosomal subunit"/>
    <property type="evidence" value="ECO:0007669"/>
    <property type="project" value="InterPro"/>
</dbReference>
<dbReference type="GO" id="GO:0019843">
    <property type="term" value="F:rRNA binding"/>
    <property type="evidence" value="ECO:0007669"/>
    <property type="project" value="UniProtKB-UniRule"/>
</dbReference>
<dbReference type="GO" id="GO:0003735">
    <property type="term" value="F:structural constituent of ribosome"/>
    <property type="evidence" value="ECO:0007669"/>
    <property type="project" value="InterPro"/>
</dbReference>
<dbReference type="GO" id="GO:0042274">
    <property type="term" value="P:ribosomal small subunit biogenesis"/>
    <property type="evidence" value="ECO:0007669"/>
    <property type="project" value="TreeGrafter"/>
</dbReference>
<dbReference type="GO" id="GO:0006412">
    <property type="term" value="P:translation"/>
    <property type="evidence" value="ECO:0007669"/>
    <property type="project" value="UniProtKB-UniRule"/>
</dbReference>
<dbReference type="CDD" id="cd00165">
    <property type="entry name" value="S4"/>
    <property type="match status" value="1"/>
</dbReference>
<dbReference type="FunFam" id="1.10.1050.10:FF:000002">
    <property type="entry name" value="30S ribosomal protein S4, chloroplastic"/>
    <property type="match status" value="1"/>
</dbReference>
<dbReference type="FunFam" id="3.10.290.10:FF:000081">
    <property type="entry name" value="30S ribosomal protein S4, chloroplastic"/>
    <property type="match status" value="1"/>
</dbReference>
<dbReference type="Gene3D" id="1.10.1050.10">
    <property type="entry name" value="Ribosomal Protein S4 Delta 41, Chain A, domain 1"/>
    <property type="match status" value="1"/>
</dbReference>
<dbReference type="Gene3D" id="3.10.290.10">
    <property type="entry name" value="RNA-binding S4 domain"/>
    <property type="match status" value="1"/>
</dbReference>
<dbReference type="HAMAP" id="MF_01306_B">
    <property type="entry name" value="Ribosomal_uS4_B"/>
    <property type="match status" value="1"/>
</dbReference>
<dbReference type="InterPro" id="IPR022801">
    <property type="entry name" value="Ribosomal_uS4"/>
</dbReference>
<dbReference type="InterPro" id="IPR005709">
    <property type="entry name" value="Ribosomal_uS4_bac-type"/>
</dbReference>
<dbReference type="InterPro" id="IPR001912">
    <property type="entry name" value="Ribosomal_uS4_N"/>
</dbReference>
<dbReference type="InterPro" id="IPR002942">
    <property type="entry name" value="S4_RNA-bd"/>
</dbReference>
<dbReference type="InterPro" id="IPR036986">
    <property type="entry name" value="S4_RNA-bd_sf"/>
</dbReference>
<dbReference type="NCBIfam" id="NF003717">
    <property type="entry name" value="PRK05327.1"/>
    <property type="match status" value="1"/>
</dbReference>
<dbReference type="NCBIfam" id="TIGR01017">
    <property type="entry name" value="rpsD_bact"/>
    <property type="match status" value="1"/>
</dbReference>
<dbReference type="PANTHER" id="PTHR11831">
    <property type="entry name" value="30S 40S RIBOSOMAL PROTEIN"/>
    <property type="match status" value="1"/>
</dbReference>
<dbReference type="PANTHER" id="PTHR11831:SF4">
    <property type="entry name" value="SMALL RIBOSOMAL SUBUNIT PROTEIN US4M"/>
    <property type="match status" value="1"/>
</dbReference>
<dbReference type="Pfam" id="PF00163">
    <property type="entry name" value="Ribosomal_S4"/>
    <property type="match status" value="1"/>
</dbReference>
<dbReference type="Pfam" id="PF01479">
    <property type="entry name" value="S4"/>
    <property type="match status" value="1"/>
</dbReference>
<dbReference type="SMART" id="SM01390">
    <property type="entry name" value="Ribosomal_S4"/>
    <property type="match status" value="1"/>
</dbReference>
<dbReference type="SMART" id="SM00363">
    <property type="entry name" value="S4"/>
    <property type="match status" value="1"/>
</dbReference>
<dbReference type="SUPFAM" id="SSF55174">
    <property type="entry name" value="Alpha-L RNA-binding motif"/>
    <property type="match status" value="1"/>
</dbReference>
<dbReference type="PROSITE" id="PS50889">
    <property type="entry name" value="S4"/>
    <property type="match status" value="1"/>
</dbReference>
<organism>
    <name type="scientific">Sphaerocarpos donnelli</name>
    <name type="common">Liverwort</name>
    <dbReference type="NCBI Taxonomy" id="39027"/>
    <lineage>
        <taxon>Eukaryota</taxon>
        <taxon>Viridiplantae</taxon>
        <taxon>Streptophyta</taxon>
        <taxon>Embryophyta</taxon>
        <taxon>Marchantiophyta</taxon>
        <taxon>Marchantiopsida</taxon>
        <taxon>Marchantiidae</taxon>
        <taxon>Sphaerocarpales</taxon>
        <taxon>Sphaerocarpaceae</taxon>
        <taxon>Sphaerocarpos</taxon>
    </lineage>
</organism>
<feature type="chain" id="PRO_0000132669" description="Small ribosomal subunit protein uS4c">
    <location>
        <begin position="1"/>
        <end position="202"/>
    </location>
</feature>
<feature type="domain" description="S4 RNA-binding">
    <location>
        <begin position="90"/>
        <end position="153"/>
    </location>
</feature>
<geneLocation type="chloroplast"/>
<keyword id="KW-0150">Chloroplast</keyword>
<keyword id="KW-0934">Plastid</keyword>
<keyword id="KW-0687">Ribonucleoprotein</keyword>
<keyword id="KW-0689">Ribosomal protein</keyword>
<keyword id="KW-0694">RNA-binding</keyword>
<keyword id="KW-0699">rRNA-binding</keyword>
<gene>
    <name type="primary">rps4</name>
</gene>
<sequence>MSRYRGPRVRIIRRLGTLPGLTNKTPQLKSGSINQSTSNKKISQYRIRLEEKQKLRFHYGITERQLLNYVRIARRAKGSTGEVLLQLSEMRLDNVIFRLGMAPTIPGARQLVNHRHILVNDYIVDIPSYRCKPQDFITIKNQQKSETIISKNIEFYQKSKIPNHLTYSSLEKKGLVNQILDRESIGLKINELLVVEYYSRQA</sequence>
<reference key="1">
    <citation type="submission" date="1999-10" db="EMBL/GenBank/DDBJ databases">
        <title>A molecular approach to bryophyte systematics.</title>
        <authorList>
            <person name="Capesius I."/>
            <person name="Bloecher R."/>
        </authorList>
    </citation>
    <scope>NUCLEOTIDE SEQUENCE [GENOMIC DNA]</scope>
    <source>
        <tissue>Gametophyte</tissue>
    </source>
</reference>